<reference key="1">
    <citation type="submission" date="2007-08" db="EMBL/GenBank/DDBJ databases">
        <title>Complete sequence of Roseiflexus castenholzii DSM 13941.</title>
        <authorList>
            <consortium name="US DOE Joint Genome Institute"/>
            <person name="Copeland A."/>
            <person name="Lucas S."/>
            <person name="Lapidus A."/>
            <person name="Barry K."/>
            <person name="Glavina del Rio T."/>
            <person name="Dalin E."/>
            <person name="Tice H."/>
            <person name="Pitluck S."/>
            <person name="Thompson L.S."/>
            <person name="Brettin T."/>
            <person name="Bruce D."/>
            <person name="Detter J.C."/>
            <person name="Han C."/>
            <person name="Tapia R."/>
            <person name="Schmutz J."/>
            <person name="Larimer F."/>
            <person name="Land M."/>
            <person name="Hauser L."/>
            <person name="Kyrpides N."/>
            <person name="Mikhailova N."/>
            <person name="Bryant D.A."/>
            <person name="Hanada S."/>
            <person name="Tsukatani Y."/>
            <person name="Richardson P."/>
        </authorList>
    </citation>
    <scope>NUCLEOTIDE SEQUENCE [LARGE SCALE GENOMIC DNA]</scope>
    <source>
        <strain>DSM 13941 / HLO8</strain>
    </source>
</reference>
<name>NUOK_ROSCS</name>
<proteinExistence type="inferred from homology"/>
<feature type="chain" id="PRO_0000390211" description="NADH-quinone oxidoreductase subunit K">
    <location>
        <begin position="1"/>
        <end position="100"/>
    </location>
</feature>
<feature type="transmembrane region" description="Helical" evidence="1">
    <location>
        <begin position="3"/>
        <end position="23"/>
    </location>
</feature>
<feature type="transmembrane region" description="Helical" evidence="1">
    <location>
        <begin position="29"/>
        <end position="49"/>
    </location>
</feature>
<feature type="transmembrane region" description="Helical" evidence="1">
    <location>
        <begin position="60"/>
        <end position="80"/>
    </location>
</feature>
<evidence type="ECO:0000255" key="1">
    <source>
        <dbReference type="HAMAP-Rule" id="MF_01456"/>
    </source>
</evidence>
<sequence length="100" mass="10739">MVPTSYYILLSALLFTLGVVGVITRRNALVLFMSVELMLNSANLALVTFAMARQDVAGQIVVFFVIVVAAAEVAVGLALLVAIFRTKHTTDVDEINALRG</sequence>
<keyword id="KW-1003">Cell membrane</keyword>
<keyword id="KW-0472">Membrane</keyword>
<keyword id="KW-0520">NAD</keyword>
<keyword id="KW-0874">Quinone</keyword>
<keyword id="KW-1185">Reference proteome</keyword>
<keyword id="KW-1278">Translocase</keyword>
<keyword id="KW-0812">Transmembrane</keyword>
<keyword id="KW-1133">Transmembrane helix</keyword>
<keyword id="KW-0813">Transport</keyword>
<keyword id="KW-0830">Ubiquinone</keyword>
<dbReference type="EC" id="7.1.1.-" evidence="1"/>
<dbReference type="EMBL" id="CP000804">
    <property type="protein sequence ID" value="ABU59435.1"/>
    <property type="molecule type" value="Genomic_DNA"/>
</dbReference>
<dbReference type="RefSeq" id="WP_012121859.1">
    <property type="nucleotide sequence ID" value="NC_009767.1"/>
</dbReference>
<dbReference type="SMR" id="A7NPD9"/>
<dbReference type="STRING" id="383372.Rcas_3385"/>
<dbReference type="KEGG" id="rca:Rcas_3385"/>
<dbReference type="eggNOG" id="COG0713">
    <property type="taxonomic scope" value="Bacteria"/>
</dbReference>
<dbReference type="HOGENOM" id="CLU_144724_0_0_0"/>
<dbReference type="OrthoDB" id="9810120at2"/>
<dbReference type="Proteomes" id="UP000000263">
    <property type="component" value="Chromosome"/>
</dbReference>
<dbReference type="GO" id="GO:0030964">
    <property type="term" value="C:NADH dehydrogenase complex"/>
    <property type="evidence" value="ECO:0007669"/>
    <property type="project" value="TreeGrafter"/>
</dbReference>
<dbReference type="GO" id="GO:0005886">
    <property type="term" value="C:plasma membrane"/>
    <property type="evidence" value="ECO:0007669"/>
    <property type="project" value="UniProtKB-SubCell"/>
</dbReference>
<dbReference type="GO" id="GO:0050136">
    <property type="term" value="F:NADH:ubiquinone reductase (non-electrogenic) activity"/>
    <property type="evidence" value="ECO:0007669"/>
    <property type="project" value="UniProtKB-UniRule"/>
</dbReference>
<dbReference type="GO" id="GO:0048038">
    <property type="term" value="F:quinone binding"/>
    <property type="evidence" value="ECO:0007669"/>
    <property type="project" value="UniProtKB-KW"/>
</dbReference>
<dbReference type="GO" id="GO:0042773">
    <property type="term" value="P:ATP synthesis coupled electron transport"/>
    <property type="evidence" value="ECO:0007669"/>
    <property type="project" value="InterPro"/>
</dbReference>
<dbReference type="FunFam" id="1.10.287.3510:FF:000001">
    <property type="entry name" value="NADH-quinone oxidoreductase subunit K"/>
    <property type="match status" value="1"/>
</dbReference>
<dbReference type="Gene3D" id="1.10.287.3510">
    <property type="match status" value="1"/>
</dbReference>
<dbReference type="HAMAP" id="MF_01456">
    <property type="entry name" value="NDH1_NuoK"/>
    <property type="match status" value="1"/>
</dbReference>
<dbReference type="InterPro" id="IPR001133">
    <property type="entry name" value="NADH_UbQ_OxRdtase_chain4L/K"/>
</dbReference>
<dbReference type="InterPro" id="IPR039428">
    <property type="entry name" value="NUOK/Mnh_C1-like"/>
</dbReference>
<dbReference type="NCBIfam" id="NF004320">
    <property type="entry name" value="PRK05715.1-2"/>
    <property type="match status" value="1"/>
</dbReference>
<dbReference type="NCBIfam" id="NF004321">
    <property type="entry name" value="PRK05715.1-3"/>
    <property type="match status" value="1"/>
</dbReference>
<dbReference type="NCBIfam" id="NF004323">
    <property type="entry name" value="PRK05715.1-5"/>
    <property type="match status" value="1"/>
</dbReference>
<dbReference type="PANTHER" id="PTHR11434:SF21">
    <property type="entry name" value="NADH DEHYDROGENASE SUBUNIT 4L-RELATED"/>
    <property type="match status" value="1"/>
</dbReference>
<dbReference type="PANTHER" id="PTHR11434">
    <property type="entry name" value="NADH-UBIQUINONE OXIDOREDUCTASE SUBUNIT ND4L"/>
    <property type="match status" value="1"/>
</dbReference>
<dbReference type="Pfam" id="PF00420">
    <property type="entry name" value="Oxidored_q2"/>
    <property type="match status" value="1"/>
</dbReference>
<protein>
    <recommendedName>
        <fullName evidence="1">NADH-quinone oxidoreductase subunit K</fullName>
        <ecNumber evidence="1">7.1.1.-</ecNumber>
    </recommendedName>
    <alternativeName>
        <fullName evidence="1">NADH dehydrogenase I subunit K</fullName>
    </alternativeName>
    <alternativeName>
        <fullName evidence="1">NDH-1 subunit K</fullName>
    </alternativeName>
</protein>
<gene>
    <name evidence="1" type="primary">nuoK</name>
    <name type="ordered locus">Rcas_3385</name>
</gene>
<accession>A7NPD9</accession>
<comment type="function">
    <text evidence="1">NDH-1 shuttles electrons from NADH, via FMN and iron-sulfur (Fe-S) centers, to quinones in the respiratory chain. The immediate electron acceptor for the enzyme in this species is believed to be ubiquinone. Couples the redox reaction to proton translocation (for every two electrons transferred, four hydrogen ions are translocated across the cytoplasmic membrane), and thus conserves the redox energy in a proton gradient.</text>
</comment>
<comment type="catalytic activity">
    <reaction evidence="1">
        <text>a quinone + NADH + 5 H(+)(in) = a quinol + NAD(+) + 4 H(+)(out)</text>
        <dbReference type="Rhea" id="RHEA:57888"/>
        <dbReference type="ChEBI" id="CHEBI:15378"/>
        <dbReference type="ChEBI" id="CHEBI:24646"/>
        <dbReference type="ChEBI" id="CHEBI:57540"/>
        <dbReference type="ChEBI" id="CHEBI:57945"/>
        <dbReference type="ChEBI" id="CHEBI:132124"/>
    </reaction>
</comment>
<comment type="subunit">
    <text evidence="1">NDH-1 is composed of 14 different subunits. Subunits NuoA, H, J, K, L, M, N constitute the membrane sector of the complex.</text>
</comment>
<comment type="subcellular location">
    <subcellularLocation>
        <location evidence="1">Cell membrane</location>
        <topology evidence="1">Multi-pass membrane protein</topology>
    </subcellularLocation>
</comment>
<comment type="similarity">
    <text evidence="1">Belongs to the complex I subunit 4L family.</text>
</comment>
<organism>
    <name type="scientific">Roseiflexus castenholzii (strain DSM 13941 / HLO8)</name>
    <dbReference type="NCBI Taxonomy" id="383372"/>
    <lineage>
        <taxon>Bacteria</taxon>
        <taxon>Bacillati</taxon>
        <taxon>Chloroflexota</taxon>
        <taxon>Chloroflexia</taxon>
        <taxon>Chloroflexales</taxon>
        <taxon>Roseiflexineae</taxon>
        <taxon>Roseiflexaceae</taxon>
        <taxon>Roseiflexus</taxon>
    </lineage>
</organism>